<organism>
    <name type="scientific">Saccharomyces cerevisiae (strain ATCC 204508 / S288c)</name>
    <name type="common">Baker's yeast</name>
    <dbReference type="NCBI Taxonomy" id="559292"/>
    <lineage>
        <taxon>Eukaryota</taxon>
        <taxon>Fungi</taxon>
        <taxon>Dikarya</taxon>
        <taxon>Ascomycota</taxon>
        <taxon>Saccharomycotina</taxon>
        <taxon>Saccharomycetes</taxon>
        <taxon>Saccharomycetales</taxon>
        <taxon>Saccharomycetaceae</taxon>
        <taxon>Saccharomyces</taxon>
    </lineage>
</organism>
<proteinExistence type="evidence at protein level"/>
<evidence type="ECO:0000255" key="1">
    <source>
        <dbReference type="PROSITE-ProRule" id="PRU00056"/>
    </source>
</evidence>
<evidence type="ECO:0000269" key="2">
    <source>
    </source>
</evidence>
<evidence type="ECO:0000269" key="3">
    <source>
    </source>
</evidence>
<evidence type="ECO:0000269" key="4">
    <source>
    </source>
</evidence>
<evidence type="ECO:0000269" key="5">
    <source>
    </source>
</evidence>
<evidence type="ECO:0000269" key="6">
    <source>
    </source>
</evidence>
<evidence type="ECO:0000269" key="7">
    <source>
    </source>
</evidence>
<evidence type="ECO:0000269" key="8">
    <source>
    </source>
</evidence>
<evidence type="ECO:0000269" key="9">
    <source>
    </source>
</evidence>
<evidence type="ECO:0000269" key="10">
    <source>
    </source>
</evidence>
<evidence type="ECO:0000305" key="11"/>
<evidence type="ECO:0007744" key="12">
    <source>
    </source>
</evidence>
<evidence type="ECO:0007829" key="13">
    <source>
        <dbReference type="PDB" id="7WVT"/>
    </source>
</evidence>
<evidence type="ECO:0007829" key="14">
    <source>
        <dbReference type="PDB" id="7WWE"/>
    </source>
</evidence>
<gene>
    <name type="primary">CSR1</name>
    <name type="synonym">SFH2</name>
    <name type="ordered locus">YLR380W</name>
</gene>
<protein>
    <recommendedName>
        <fullName>Phosphatidylinositol transfer protein CSR1</fullName>
    </recommendedName>
    <alternativeName>
        <fullName>CHS5 SPA2 rescue protein 1</fullName>
    </alternativeName>
    <alternativeName>
        <fullName>SEC14 homolog protein 2</fullName>
    </alternativeName>
</protein>
<feature type="initiator methionine" description="Removed" evidence="12">
    <location>
        <position position="1"/>
    </location>
</feature>
<feature type="chain" id="PRO_0000228155" description="Phosphatidylinositol transfer protein CSR1">
    <location>
        <begin position="2"/>
        <end position="408"/>
    </location>
</feature>
<feature type="domain" description="CRAL-TRIO" evidence="1">
    <location>
        <begin position="157"/>
        <end position="317"/>
    </location>
</feature>
<feature type="modified residue" description="N-acetylserine" evidence="12">
    <location>
        <position position="2"/>
    </location>
</feature>
<feature type="modified residue" description="Phosphoserine" evidence="12">
    <location>
        <position position="2"/>
    </location>
</feature>
<feature type="sequence conflict" description="In Ref. 3; AAT92884." evidence="11" ref="3">
    <original>Q</original>
    <variation>H</variation>
    <location>
        <position position="6"/>
    </location>
</feature>
<feature type="helix" evidence="13">
    <location>
        <begin position="9"/>
        <end position="26"/>
    </location>
</feature>
<feature type="helix" evidence="13">
    <location>
        <begin position="33"/>
        <end position="35"/>
    </location>
</feature>
<feature type="helix" evidence="13">
    <location>
        <begin position="85"/>
        <end position="87"/>
    </location>
</feature>
<feature type="helix" evidence="13">
    <location>
        <begin position="92"/>
        <end position="102"/>
    </location>
</feature>
<feature type="strand" evidence="14">
    <location>
        <begin position="104"/>
        <end position="106"/>
    </location>
</feature>
<feature type="helix" evidence="13">
    <location>
        <begin position="108"/>
        <end position="118"/>
    </location>
</feature>
<feature type="turn" evidence="13">
    <location>
        <begin position="119"/>
        <end position="121"/>
    </location>
</feature>
<feature type="helix" evidence="13">
    <location>
        <begin position="123"/>
        <end position="137"/>
    </location>
</feature>
<feature type="helix" evidence="13">
    <location>
        <begin position="140"/>
        <end position="154"/>
    </location>
</feature>
<feature type="helix" evidence="13">
    <location>
        <begin position="158"/>
        <end position="166"/>
    </location>
</feature>
<feature type="strand" evidence="13">
    <location>
        <begin position="168"/>
        <end position="174"/>
    </location>
</feature>
<feature type="strand" evidence="13">
    <location>
        <begin position="180"/>
        <end position="184"/>
    </location>
</feature>
<feature type="helix" evidence="13">
    <location>
        <begin position="186"/>
        <end position="188"/>
    </location>
</feature>
<feature type="helix" evidence="13">
    <location>
        <begin position="191"/>
        <end position="193"/>
    </location>
</feature>
<feature type="helix" evidence="13">
    <location>
        <begin position="196"/>
        <end position="212"/>
    </location>
</feature>
<feature type="strand" evidence="13">
    <location>
        <begin position="222"/>
        <end position="227"/>
    </location>
</feature>
<feature type="helix" evidence="13">
    <location>
        <begin position="233"/>
        <end position="235"/>
    </location>
</feature>
<feature type="helix" evidence="13">
    <location>
        <begin position="238"/>
        <end position="251"/>
    </location>
</feature>
<feature type="strand" evidence="13">
    <location>
        <begin position="256"/>
        <end position="263"/>
    </location>
</feature>
<feature type="helix" evidence="13">
    <location>
        <begin position="268"/>
        <end position="275"/>
    </location>
</feature>
<feature type="helix" evidence="13">
    <location>
        <begin position="276"/>
        <end position="278"/>
    </location>
</feature>
<feature type="helix" evidence="13">
    <location>
        <begin position="281"/>
        <end position="285"/>
    </location>
</feature>
<feature type="strand" evidence="13">
    <location>
        <begin position="287"/>
        <end position="290"/>
    </location>
</feature>
<feature type="helix" evidence="13">
    <location>
        <begin position="293"/>
        <end position="297"/>
    </location>
</feature>
<feature type="turn" evidence="13">
    <location>
        <begin position="302"/>
        <end position="304"/>
    </location>
</feature>
<feature type="helix" evidence="13">
    <location>
        <begin position="307"/>
        <end position="309"/>
    </location>
</feature>
<feature type="strand" evidence="13">
    <location>
        <begin position="311"/>
        <end position="313"/>
    </location>
</feature>
<feature type="strand" evidence="13">
    <location>
        <begin position="317"/>
        <end position="319"/>
    </location>
</feature>
<feature type="turn" evidence="13">
    <location>
        <begin position="329"/>
        <end position="332"/>
    </location>
</feature>
<feature type="helix" evidence="13">
    <location>
        <begin position="334"/>
        <end position="360"/>
    </location>
</feature>
<feature type="helix" evidence="13">
    <location>
        <begin position="367"/>
        <end position="394"/>
    </location>
</feature>
<feature type="helix" evidence="13">
    <location>
        <begin position="399"/>
        <end position="402"/>
    </location>
</feature>
<accession>Q06705</accession>
<accession>D6VZ15</accession>
<accession>Q6B265</accession>
<comment type="function">
    <text evidence="2 3 4 5 6 8 9 10">Non-classical phosphatidylinositol (PtdIns) transfer protein (PITP), which exhibits PtdIns-binding/transfer activity in the absence of detectable PtdCho-binding/transfer activity. Activates SPO14/PLD1 (phospholipase D1) by stimulating phosphoinositide synthesis via the STT4 PtdIns 4-kinase. Modulates ArfGAP function through effects on SPO14 activity. Inhibits phosphatidylcholine degradation by PLB1 (phospholipase B1). May also regulate post-Golgi membrane-trafficking events and have a role resistance to oxidative stress. Inhibits fatty acid synthase activity in response to heme depletion and oleic acid starvation, preventing saturated fatty acid (SFA) accumulation (PubMed:17803462).</text>
</comment>
<comment type="catalytic activity">
    <reaction evidence="3">
        <text>a 1,2-diacyl-sn-glycero-3-phospho-(1D-myo-inositol)(in) = a 1,2-diacyl-sn-glycero-3-phospho-(1D-myo-inositol)(out)</text>
        <dbReference type="Rhea" id="RHEA:38691"/>
        <dbReference type="ChEBI" id="CHEBI:57880"/>
    </reaction>
    <physiologicalReaction direction="left-to-right" evidence="3">
        <dbReference type="Rhea" id="RHEA:38692"/>
    </physiologicalReaction>
</comment>
<comment type="subunit">
    <text>Forms a complex with 2 TSA2 subunits. Binds phosphatidylinositol (PtdIns).</text>
</comment>
<comment type="subcellular location">
    <subcellularLocation>
        <location evidence="6">Cytoplasm</location>
    </subcellularLocation>
    <subcellularLocation>
        <location evidence="6">Microsome</location>
    </subcellularLocation>
    <subcellularLocation>
        <location evidence="3">Endosome</location>
    </subcellularLocation>
</comment>
<comment type="miscellaneous">
    <text evidence="7">Present with 9600 molecules/cell in log phase SD medium.</text>
</comment>
<comment type="similarity">
    <text evidence="11">Belongs to the PITP family.</text>
</comment>
<reference key="1">
    <citation type="journal article" date="1997" name="Nature">
        <title>The nucleotide sequence of Saccharomyces cerevisiae chromosome XII.</title>
        <authorList>
            <person name="Johnston M."/>
            <person name="Hillier L.W."/>
            <person name="Riles L."/>
            <person name="Albermann K."/>
            <person name="Andre B."/>
            <person name="Ansorge W."/>
            <person name="Benes V."/>
            <person name="Brueckner M."/>
            <person name="Delius H."/>
            <person name="Dubois E."/>
            <person name="Duesterhoeft A."/>
            <person name="Entian K.-D."/>
            <person name="Floeth M."/>
            <person name="Goffeau A."/>
            <person name="Hebling U."/>
            <person name="Heumann K."/>
            <person name="Heuss-Neitzel D."/>
            <person name="Hilbert H."/>
            <person name="Hilger F."/>
            <person name="Kleine K."/>
            <person name="Koetter P."/>
            <person name="Louis E.J."/>
            <person name="Messenguy F."/>
            <person name="Mewes H.-W."/>
            <person name="Miosga T."/>
            <person name="Moestl D."/>
            <person name="Mueller-Auer S."/>
            <person name="Nentwich U."/>
            <person name="Obermaier B."/>
            <person name="Piravandi E."/>
            <person name="Pohl T.M."/>
            <person name="Portetelle D."/>
            <person name="Purnelle B."/>
            <person name="Rechmann S."/>
            <person name="Rieger M."/>
            <person name="Rinke M."/>
            <person name="Rose M."/>
            <person name="Scharfe M."/>
            <person name="Scherens B."/>
            <person name="Scholler P."/>
            <person name="Schwager C."/>
            <person name="Schwarz S."/>
            <person name="Underwood A.P."/>
            <person name="Urrestarazu L.A."/>
            <person name="Vandenbol M."/>
            <person name="Verhasselt P."/>
            <person name="Vierendeels F."/>
            <person name="Voet M."/>
            <person name="Volckaert G."/>
            <person name="Voss H."/>
            <person name="Wambutt R."/>
            <person name="Wedler E."/>
            <person name="Wedler H."/>
            <person name="Zimmermann F.K."/>
            <person name="Zollner A."/>
            <person name="Hani J."/>
            <person name="Hoheisel J.D."/>
        </authorList>
    </citation>
    <scope>NUCLEOTIDE SEQUENCE [LARGE SCALE GENOMIC DNA]</scope>
    <source>
        <strain>ATCC 204508 / S288c</strain>
    </source>
</reference>
<reference key="2">
    <citation type="journal article" date="2014" name="G3 (Bethesda)">
        <title>The reference genome sequence of Saccharomyces cerevisiae: Then and now.</title>
        <authorList>
            <person name="Engel S.R."/>
            <person name="Dietrich F.S."/>
            <person name="Fisk D.G."/>
            <person name="Binkley G."/>
            <person name="Balakrishnan R."/>
            <person name="Costanzo M.C."/>
            <person name="Dwight S.S."/>
            <person name="Hitz B.C."/>
            <person name="Karra K."/>
            <person name="Nash R.S."/>
            <person name="Weng S."/>
            <person name="Wong E.D."/>
            <person name="Lloyd P."/>
            <person name="Skrzypek M.S."/>
            <person name="Miyasato S.R."/>
            <person name="Simison M."/>
            <person name="Cherry J.M."/>
        </authorList>
    </citation>
    <scope>GENOME REANNOTATION</scope>
    <source>
        <strain>ATCC 204508 / S288c</strain>
    </source>
</reference>
<reference key="3">
    <citation type="journal article" date="2007" name="Genome Res.">
        <title>Approaching a complete repository of sequence-verified protein-encoding clones for Saccharomyces cerevisiae.</title>
        <authorList>
            <person name="Hu Y."/>
            <person name="Rolfs A."/>
            <person name="Bhullar B."/>
            <person name="Murthy T.V.S."/>
            <person name="Zhu C."/>
            <person name="Berger M.F."/>
            <person name="Camargo A.A."/>
            <person name="Kelley F."/>
            <person name="McCarron S."/>
            <person name="Jepson D."/>
            <person name="Richardson A."/>
            <person name="Raphael J."/>
            <person name="Moreira D."/>
            <person name="Taycher E."/>
            <person name="Zuo D."/>
            <person name="Mohr S."/>
            <person name="Kane M.F."/>
            <person name="Williamson J."/>
            <person name="Simpson A.J.G."/>
            <person name="Bulyk M.L."/>
            <person name="Harlow E."/>
            <person name="Marsischky G."/>
            <person name="Kolodner R.D."/>
            <person name="LaBaer J."/>
        </authorList>
    </citation>
    <scope>NUCLEOTIDE SEQUENCE [GENOMIC DNA]</scope>
    <source>
        <strain>ATCC 204508 / S288c</strain>
    </source>
</reference>
<reference key="4">
    <citation type="journal article" date="2000" name="Mol. Biol. Cell">
        <title>Sbe2p and sbe22p, two homologous Golgi proteins involved in yeast cell wall formation.</title>
        <authorList>
            <person name="Santos B."/>
            <person name="Snyder M."/>
        </authorList>
    </citation>
    <scope>FUNCTION</scope>
</reference>
<reference key="5">
    <citation type="journal article" date="2000" name="Mol. Biol. Cell">
        <title>Identification of a novel family of nonclassic yeast phosphatidylinositol transfer proteins whose function modulates phospholipase D activity and Sec14p-independent cell growth.</title>
        <authorList>
            <person name="Li X."/>
            <person name="Routt S.M."/>
            <person name="Xie Z."/>
            <person name="Cui X."/>
            <person name="Fang M."/>
            <person name="Kearns M.A."/>
            <person name="Bard M."/>
            <person name="Kirsch D.R."/>
            <person name="Bankaitis V.A."/>
        </authorList>
    </citation>
    <scope>FUNCTION</scope>
    <scope>CATALYTIC ACTIVITY</scope>
    <scope>PHOSPHATIDYLINOSITOL-BINDING</scope>
    <scope>SUBCELLULAR LOCATION</scope>
</reference>
<reference key="6">
    <citation type="journal article" date="2002" name="FEMS Microbiol. Lett.">
        <title>SUT1 suppresses sec14-1 through upregulation of CSR1 in Saccharomyces cerevisiae.</title>
        <authorList>
            <person name="Regnacq M."/>
            <person name="Ferreira T."/>
            <person name="Puard J."/>
            <person name="Berges T."/>
        </authorList>
    </citation>
    <scope>FUNCTION</scope>
</reference>
<reference key="7">
    <citation type="journal article" date="2003" name="Eur. J. Biochem.">
        <title>Subcellular localization of yeast Sec14 homologues and their involvement in regulation of phospholipid turnover.</title>
        <authorList>
            <person name="Schnabl M."/>
            <person name="Oskolkova O.V."/>
            <person name="Holic R."/>
            <person name="Brezna B."/>
            <person name="Pichler H."/>
            <person name="Zagorsek M."/>
            <person name="Kohlwein S.D."/>
            <person name="Paltauf F."/>
            <person name="Daum G."/>
            <person name="Griac P."/>
        </authorList>
    </citation>
    <scope>FUNCTION</scope>
    <scope>SUBCELLULAR LOCATION</scope>
</reference>
<reference key="8">
    <citation type="journal article" date="2003" name="J. Biol. Chem.">
        <title>The protein interaction of Saccharomyces cerevisiae cytoplasmic thiol peroxidase II with SFH2p and its in vivo function.</title>
        <authorList>
            <person name="Cha M.-K."/>
            <person name="Hong S.-K."/>
            <person name="Oh Y.-M."/>
            <person name="Kim I.-H."/>
        </authorList>
    </citation>
    <scope>FUNCTION</scope>
    <scope>INTERACTION WITH TSA2</scope>
</reference>
<reference key="9">
    <citation type="journal article" date="2003" name="Nature">
        <title>Global analysis of protein expression in yeast.</title>
        <authorList>
            <person name="Ghaemmaghami S."/>
            <person name="Huh W.-K."/>
            <person name="Bower K."/>
            <person name="Howson R.W."/>
            <person name="Belle A."/>
            <person name="Dephoure N."/>
            <person name="O'Shea E.K."/>
            <person name="Weissman J.S."/>
        </authorList>
    </citation>
    <scope>LEVEL OF PROTEIN EXPRESSION [LARGE SCALE ANALYSIS]</scope>
</reference>
<reference key="10">
    <citation type="journal article" date="2005" name="Mol. Cell. Proteomics">
        <title>Quantitative phosphoproteomics applied to the yeast pheromone signaling pathway.</title>
        <authorList>
            <person name="Gruhler A."/>
            <person name="Olsen J.V."/>
            <person name="Mohammed S."/>
            <person name="Mortensen P."/>
            <person name="Faergeman N.J."/>
            <person name="Mann M."/>
            <person name="Jensen O.N."/>
        </authorList>
    </citation>
    <scope>ACETYLATION [LARGE SCALE ANALYSIS] AT SER-2</scope>
    <scope>PHOSPHORYLATION [LARGE SCALE ANALYSIS] AT SER-2</scope>
    <scope>CLEAVAGE OF INITIATOR METHIONINE [LARGE SCALE ANALYSIS]</scope>
    <scope>IDENTIFICATION BY MASS SPECTROMETRY [LARGE SCALE ANALYSIS]</scope>
    <source>
        <strain>YAL6B</strain>
    </source>
</reference>
<reference key="11">
    <citation type="journal article" date="2005" name="Proc. Natl. Acad. Sci. U.S.A.">
        <title>Membrane metabolism mediated by Sec14 family members influences Arf GTPase activating protein activity for transport from the trans-Golgi.</title>
        <authorList>
            <person name="Wong T.A."/>
            <person name="Fairn G.D."/>
            <person name="Poon P.P."/>
            <person name="Shmulevitz M."/>
            <person name="McMaster C.R."/>
            <person name="Singer R.A."/>
            <person name="Johnston G.C."/>
        </authorList>
    </citation>
    <scope>FUNCTION</scope>
</reference>
<reference key="12">
    <citation type="journal article" date="2005" name="Traffic">
        <title>Nonclassical PITPs activate PLD via the Stt4p PtdIns-4-kinase and modulate function of late stages of exocytosis in vegetative yeast.</title>
        <authorList>
            <person name="Routt S.M."/>
            <person name="Ryan M.M."/>
            <person name="Tyeryar K."/>
            <person name="Rizzieri K.E."/>
            <person name="Mousley C."/>
            <person name="Roumanie O."/>
            <person name="Brennwald P.J."/>
            <person name="Bankaitis V.A."/>
        </authorList>
    </citation>
    <scope>FUNCTION</scope>
</reference>
<reference key="13">
    <citation type="journal article" date="2008" name="Biochem. J.">
        <title>SFH2 regulates fatty acid synthase activity in the yeast Saccharomyces cerevisiae and is critical to prevent saturated fatty acid accumulation in response to haem and oleic acid depletion.</title>
        <authorList>
            <person name="Desfougeres T."/>
            <person name="Ferreira T."/>
            <person name="Berges T."/>
            <person name="Regnacq M."/>
        </authorList>
    </citation>
    <scope>FUNCTION</scope>
</reference>
<keyword id="KW-0002">3D-structure</keyword>
<keyword id="KW-0007">Acetylation</keyword>
<keyword id="KW-0963">Cytoplasm</keyword>
<keyword id="KW-0256">Endoplasmic reticulum</keyword>
<keyword id="KW-0967">Endosome</keyword>
<keyword id="KW-0442">Lipid degradation</keyword>
<keyword id="KW-0443">Lipid metabolism</keyword>
<keyword id="KW-0445">Lipid transport</keyword>
<keyword id="KW-0492">Microsome</keyword>
<keyword id="KW-0595">Phospholipid degradation</keyword>
<keyword id="KW-1208">Phospholipid metabolism</keyword>
<keyword id="KW-0597">Phosphoprotein</keyword>
<keyword id="KW-1185">Reference proteome</keyword>
<keyword id="KW-0813">Transport</keyword>
<sequence length="408" mass="47463">MSFDRQLTEDQEVVLKQIWTHLFHLWQVPVDGTHIFPNNSLHSSSTPAKKKKSSWFSKLQSSDHTQDSSEAAEAAHLYEKGKIHKALANLDPQTTKKQFWHDIKNETPDATILKFIRARKWNADKTIAMLGHDLYWRKDTINKIINGGERAVYENNETGVIKNLELQKATIQGYDNDMRPVILVRPRLHHSSDQTEQELEKFSLLVIEQSKLFFKENYPASTTILFDLNGFSMSNMDYAPVKFLITCFEAHYPESLGHLLIHKAPWIFNPIWNIIKNWLDPVVASKIVFTKNIDELHKFIQPQYIPRYLGGENDNDLDHYTPPDGSLDVHLKDTETRAMIEKEREELVEQFLTVTAQWIEHQPLNDPAYIQLQEKRVQLSTALCENYSKLDPYIRSRSVYDYNGSLKV</sequence>
<name>CSR1_YEAST</name>
<dbReference type="EMBL" id="U19104">
    <property type="protein sequence ID" value="AAB67275.1"/>
    <property type="molecule type" value="Genomic_DNA"/>
</dbReference>
<dbReference type="EMBL" id="AY692865">
    <property type="protein sequence ID" value="AAT92884.1"/>
    <property type="molecule type" value="Genomic_DNA"/>
</dbReference>
<dbReference type="EMBL" id="BK006945">
    <property type="protein sequence ID" value="DAA09681.1"/>
    <property type="molecule type" value="Genomic_DNA"/>
</dbReference>
<dbReference type="PIR" id="S51467">
    <property type="entry name" value="S51467"/>
</dbReference>
<dbReference type="RefSeq" id="NP_013484.3">
    <property type="nucleotide sequence ID" value="NM_001182269.3"/>
</dbReference>
<dbReference type="PDB" id="7WVT">
    <property type="method" value="X-ray"/>
    <property type="resolution" value="1.50 A"/>
    <property type="chains" value="A=2-408"/>
</dbReference>
<dbReference type="PDB" id="7WWD">
    <property type="method" value="X-ray"/>
    <property type="resolution" value="2.39 A"/>
    <property type="chains" value="A=2-408"/>
</dbReference>
<dbReference type="PDB" id="7WWE">
    <property type="method" value="X-ray"/>
    <property type="resolution" value="2.20 A"/>
    <property type="chains" value="A=2-408"/>
</dbReference>
<dbReference type="PDB" id="7WWG">
    <property type="method" value="X-ray"/>
    <property type="resolution" value="3.40 A"/>
    <property type="chains" value="A=2-408"/>
</dbReference>
<dbReference type="PDBsum" id="7WVT"/>
<dbReference type="PDBsum" id="7WWD"/>
<dbReference type="PDBsum" id="7WWE"/>
<dbReference type="PDBsum" id="7WWG"/>
<dbReference type="SMR" id="Q06705"/>
<dbReference type="BioGRID" id="31639">
    <property type="interactions" value="59"/>
</dbReference>
<dbReference type="FunCoup" id="Q06705">
    <property type="interactions" value="262"/>
</dbReference>
<dbReference type="IntAct" id="Q06705">
    <property type="interactions" value="5"/>
</dbReference>
<dbReference type="MINT" id="Q06705"/>
<dbReference type="STRING" id="4932.YLR380W"/>
<dbReference type="SwissLipids" id="SLP:000000355"/>
<dbReference type="iPTMnet" id="Q06705"/>
<dbReference type="PaxDb" id="4932-YLR380W"/>
<dbReference type="PeptideAtlas" id="Q06705"/>
<dbReference type="EnsemblFungi" id="YLR380W_mRNA">
    <property type="protein sequence ID" value="YLR380W"/>
    <property type="gene ID" value="YLR380W"/>
</dbReference>
<dbReference type="GeneID" id="851096"/>
<dbReference type="KEGG" id="sce:YLR380W"/>
<dbReference type="AGR" id="SGD:S000004372"/>
<dbReference type="SGD" id="S000004372">
    <property type="gene designation" value="CSR1"/>
</dbReference>
<dbReference type="VEuPathDB" id="FungiDB:YLR380W"/>
<dbReference type="eggNOG" id="KOG1470">
    <property type="taxonomic scope" value="Eukaryota"/>
</dbReference>
<dbReference type="GeneTree" id="ENSGT00670000098638"/>
<dbReference type="HOGENOM" id="CLU_016665_2_0_1"/>
<dbReference type="InParanoid" id="Q06705"/>
<dbReference type="OMA" id="WRLIKGW"/>
<dbReference type="OrthoDB" id="43460at2759"/>
<dbReference type="BioCyc" id="YEAST:G3O-32446-MONOMER"/>
<dbReference type="BioGRID-ORCS" id="851096">
    <property type="hits" value="0 hits in 10 CRISPR screens"/>
</dbReference>
<dbReference type="PRO" id="PR:Q06705"/>
<dbReference type="Proteomes" id="UP000002311">
    <property type="component" value="Chromosome XII"/>
</dbReference>
<dbReference type="RNAct" id="Q06705">
    <property type="molecule type" value="protein"/>
</dbReference>
<dbReference type="GO" id="GO:0005829">
    <property type="term" value="C:cytosol"/>
    <property type="evidence" value="ECO:0000314"/>
    <property type="project" value="SGD"/>
</dbReference>
<dbReference type="GO" id="GO:0005783">
    <property type="term" value="C:endoplasmic reticulum"/>
    <property type="evidence" value="ECO:0007669"/>
    <property type="project" value="UniProtKB-KW"/>
</dbReference>
<dbReference type="GO" id="GO:0005768">
    <property type="term" value="C:endosome"/>
    <property type="evidence" value="ECO:0000314"/>
    <property type="project" value="SGD"/>
</dbReference>
<dbReference type="GO" id="GO:0005811">
    <property type="term" value="C:lipid droplet"/>
    <property type="evidence" value="ECO:0000314"/>
    <property type="project" value="SGD"/>
</dbReference>
<dbReference type="GO" id="GO:0005739">
    <property type="term" value="C:mitochondrion"/>
    <property type="evidence" value="ECO:0007005"/>
    <property type="project" value="SGD"/>
</dbReference>
<dbReference type="GO" id="GO:0005628">
    <property type="term" value="C:prospore membrane"/>
    <property type="evidence" value="ECO:0007005"/>
    <property type="project" value="SGD"/>
</dbReference>
<dbReference type="GO" id="GO:0008526">
    <property type="term" value="F:phosphatidylinositol transfer activity"/>
    <property type="evidence" value="ECO:0000314"/>
    <property type="project" value="SGD"/>
</dbReference>
<dbReference type="GO" id="GO:0043001">
    <property type="term" value="P:Golgi to plasma membrane protein transport"/>
    <property type="evidence" value="ECO:0000316"/>
    <property type="project" value="SGD"/>
</dbReference>
<dbReference type="GO" id="GO:0006893">
    <property type="term" value="P:Golgi to plasma membrane transport"/>
    <property type="evidence" value="ECO:0000316"/>
    <property type="project" value="SGD"/>
</dbReference>
<dbReference type="GO" id="GO:0045717">
    <property type="term" value="P:negative regulation of fatty acid biosynthetic process"/>
    <property type="evidence" value="ECO:0000314"/>
    <property type="project" value="SGD"/>
</dbReference>
<dbReference type="GO" id="GO:1901352">
    <property type="term" value="P:negative regulation of phosphatidylglycerol biosynthetic process"/>
    <property type="evidence" value="ECO:0000316"/>
    <property type="project" value="SGD"/>
</dbReference>
<dbReference type="GO" id="GO:0046488">
    <property type="term" value="P:phosphatidylinositol metabolic process"/>
    <property type="evidence" value="ECO:0000316"/>
    <property type="project" value="SGD"/>
</dbReference>
<dbReference type="GO" id="GO:0009395">
    <property type="term" value="P:phospholipid catabolic process"/>
    <property type="evidence" value="ECO:0007669"/>
    <property type="project" value="UniProtKB-KW"/>
</dbReference>
<dbReference type="GO" id="GO:0015914">
    <property type="term" value="P:phospholipid transport"/>
    <property type="evidence" value="ECO:0000314"/>
    <property type="project" value="SGD"/>
</dbReference>
<dbReference type="GO" id="GO:2001247">
    <property type="term" value="P:positive regulation of phosphatidylcholine biosynthetic process"/>
    <property type="evidence" value="ECO:0000316"/>
    <property type="project" value="SGD"/>
</dbReference>
<dbReference type="CDD" id="cd00170">
    <property type="entry name" value="SEC14"/>
    <property type="match status" value="1"/>
</dbReference>
<dbReference type="FunFam" id="3.40.525.10:FF:000023">
    <property type="entry name" value="Csr1p"/>
    <property type="match status" value="1"/>
</dbReference>
<dbReference type="Gene3D" id="3.40.525.10">
    <property type="entry name" value="CRAL-TRIO lipid binding domain"/>
    <property type="match status" value="1"/>
</dbReference>
<dbReference type="InterPro" id="IPR001251">
    <property type="entry name" value="CRAL-TRIO_dom"/>
</dbReference>
<dbReference type="InterPro" id="IPR036865">
    <property type="entry name" value="CRAL-TRIO_dom_sf"/>
</dbReference>
<dbReference type="InterPro" id="IPR011074">
    <property type="entry name" value="CRAL/TRIO_N_dom"/>
</dbReference>
<dbReference type="InterPro" id="IPR036273">
    <property type="entry name" value="CRAL/TRIO_N_dom_sf"/>
</dbReference>
<dbReference type="InterPro" id="IPR052432">
    <property type="entry name" value="PITP/CRAL-TRIO"/>
</dbReference>
<dbReference type="PANTHER" id="PTHR46590:SF1">
    <property type="entry name" value="PHOSPHATIDYLINOSITOL TRANSFER PROTEIN CSR1"/>
    <property type="match status" value="1"/>
</dbReference>
<dbReference type="PANTHER" id="PTHR46590">
    <property type="entry name" value="PHOSPHATIDYLINOSITOL TRANSFER PROTEIN CSR1-RELATED"/>
    <property type="match status" value="1"/>
</dbReference>
<dbReference type="Pfam" id="PF00650">
    <property type="entry name" value="CRAL_TRIO"/>
    <property type="match status" value="1"/>
</dbReference>
<dbReference type="Pfam" id="PF03765">
    <property type="entry name" value="CRAL_TRIO_N"/>
    <property type="match status" value="1"/>
</dbReference>
<dbReference type="SMART" id="SM01100">
    <property type="entry name" value="CRAL_TRIO_N"/>
    <property type="match status" value="1"/>
</dbReference>
<dbReference type="SMART" id="SM00516">
    <property type="entry name" value="SEC14"/>
    <property type="match status" value="1"/>
</dbReference>
<dbReference type="SUPFAM" id="SSF52087">
    <property type="entry name" value="CRAL/TRIO domain"/>
    <property type="match status" value="1"/>
</dbReference>
<dbReference type="SUPFAM" id="SSF46938">
    <property type="entry name" value="CRAL/TRIO N-terminal domain"/>
    <property type="match status" value="1"/>
</dbReference>
<dbReference type="PROSITE" id="PS50191">
    <property type="entry name" value="CRAL_TRIO"/>
    <property type="match status" value="1"/>
</dbReference>